<accession>Q297G3</accession>
<keyword id="KW-0963">Cytoplasm</keyword>
<keyword id="KW-0501">Molybdenum cofactor biosynthesis</keyword>
<keyword id="KW-1185">Reference proteome</keyword>
<keyword id="KW-0808">Transferase</keyword>
<organism>
    <name type="scientific">Drosophila pseudoobscura pseudoobscura</name>
    <name type="common">Fruit fly</name>
    <dbReference type="NCBI Taxonomy" id="46245"/>
    <lineage>
        <taxon>Eukaryota</taxon>
        <taxon>Metazoa</taxon>
        <taxon>Ecdysozoa</taxon>
        <taxon>Arthropoda</taxon>
        <taxon>Hexapoda</taxon>
        <taxon>Insecta</taxon>
        <taxon>Pterygota</taxon>
        <taxon>Neoptera</taxon>
        <taxon>Endopterygota</taxon>
        <taxon>Diptera</taxon>
        <taxon>Brachycera</taxon>
        <taxon>Muscomorpha</taxon>
        <taxon>Ephydroidea</taxon>
        <taxon>Drosophilidae</taxon>
        <taxon>Drosophila</taxon>
        <taxon>Sophophora</taxon>
    </lineage>
</organism>
<evidence type="ECO:0000250" key="1">
    <source>
        <dbReference type="UniProtKB" id="Q9VBX2"/>
    </source>
</evidence>
<evidence type="ECO:0000255" key="2">
    <source>
        <dbReference type="HAMAP-Rule" id="MF_03052"/>
    </source>
</evidence>
<comment type="function">
    <text evidence="2">Catalytic subunit of the molybdopterin synthase complex, a complex that catalyzes the conversion of precursor Z into molybdopterin. Acts by mediating the incorporation of 2 sulfur atoms from thiocarboxylated Mocs2A into precursor Z to generate a dithiolene group.</text>
</comment>
<comment type="catalytic activity">
    <reaction evidence="2">
        <text>2 [molybdopterin-synthase sulfur-carrier protein]-C-terminal-Gly-aminoethanethioate + cyclic pyranopterin phosphate + H2O = molybdopterin + 2 [molybdopterin-synthase sulfur-carrier protein]-C-terminal Gly-Gly + 2 H(+)</text>
        <dbReference type="Rhea" id="RHEA:26333"/>
        <dbReference type="Rhea" id="RHEA-COMP:12202"/>
        <dbReference type="Rhea" id="RHEA-COMP:19907"/>
        <dbReference type="ChEBI" id="CHEBI:15377"/>
        <dbReference type="ChEBI" id="CHEBI:15378"/>
        <dbReference type="ChEBI" id="CHEBI:58698"/>
        <dbReference type="ChEBI" id="CHEBI:59648"/>
        <dbReference type="ChEBI" id="CHEBI:90778"/>
        <dbReference type="ChEBI" id="CHEBI:232372"/>
        <dbReference type="EC" id="2.8.1.12"/>
    </reaction>
</comment>
<comment type="pathway">
    <text evidence="2">Cofactor biosynthesis; molybdopterin biosynthesis.</text>
</comment>
<comment type="subunit">
    <text evidence="2">Heterotetramer; composed of 2 small (Mocs2A) and 2 large (Mocs2B) subunits.</text>
</comment>
<comment type="subcellular location">
    <subcellularLocation>
        <location evidence="2">Cytoplasm</location>
    </subcellularLocation>
</comment>
<comment type="miscellaneous">
    <text>This protein is produced by a bicistronic gene which also produces the small subunit (Mocs2A).</text>
</comment>
<comment type="similarity">
    <text evidence="2">Belongs to the MoaE family. MOCS2B subfamily.</text>
</comment>
<name>MOC2B_DROPS</name>
<sequence length="361" mass="41369">MNHIKLIDCPIDVTYAINLISDPSCGASSIFIGTTRDSFQGKKVVSLAYEAYENMALKEMDKICSDLRATWPDLKHILIYHRLGTVPENEASVVIAASAPHRSAALKAVTFAIDQLKSRVPIWKKEIYEGNHDAEWKENSESIRPKKSLSSFNYSVCKVDESRVVSRNLVQIRANDCELKNRVECFFKRKRAEINSCNVIDFKQSNLSSNINSDTEVDVSCARTQSTISKQEQSNCHLKVRRATNRCGPQQMQFRPEYKHELSRLTASRVSTNEVGESLQNSRLHSIETYMGLTSKNNENIINRIKNVENRILLLESTSPEYQHFFEQSCMDQPEKKIKTNKTYSAHELRVYIHRKNKECP</sequence>
<feature type="chain" id="PRO_0000369339" description="Molybdopterin synthase catalytic subunit">
    <location>
        <begin position="1"/>
        <end position="361"/>
    </location>
</feature>
<feature type="binding site" evidence="2">
    <location>
        <begin position="101"/>
        <end position="102"/>
    </location>
    <ligand>
        <name>substrate</name>
    </ligand>
</feature>
<feature type="binding site" evidence="2">
    <location>
        <position position="117"/>
    </location>
    <ligand>
        <name>substrate</name>
    </ligand>
</feature>
<feature type="binding site" evidence="2">
    <location>
        <begin position="124"/>
        <end position="126"/>
    </location>
    <ligand>
        <name>substrate</name>
    </ligand>
</feature>
<reference key="1">
    <citation type="journal article" date="2005" name="Genome Res.">
        <title>Comparative genome sequencing of Drosophila pseudoobscura: chromosomal, gene, and cis-element evolution.</title>
        <authorList>
            <person name="Richards S."/>
            <person name="Liu Y."/>
            <person name="Bettencourt B.R."/>
            <person name="Hradecky P."/>
            <person name="Letovsky S."/>
            <person name="Nielsen R."/>
            <person name="Thornton K."/>
            <person name="Hubisz M.J."/>
            <person name="Chen R."/>
            <person name="Meisel R.P."/>
            <person name="Couronne O."/>
            <person name="Hua S."/>
            <person name="Smith M.A."/>
            <person name="Zhang P."/>
            <person name="Liu J."/>
            <person name="Bussemaker H.J."/>
            <person name="van Batenburg M.F."/>
            <person name="Howells S.L."/>
            <person name="Scherer S.E."/>
            <person name="Sodergren E."/>
            <person name="Matthews B.B."/>
            <person name="Crosby M.A."/>
            <person name="Schroeder A.J."/>
            <person name="Ortiz-Barrientos D."/>
            <person name="Rives C.M."/>
            <person name="Metzker M.L."/>
            <person name="Muzny D.M."/>
            <person name="Scott G."/>
            <person name="Steffen D."/>
            <person name="Wheeler D.A."/>
            <person name="Worley K.C."/>
            <person name="Havlak P."/>
            <person name="Durbin K.J."/>
            <person name="Egan A."/>
            <person name="Gill R."/>
            <person name="Hume J."/>
            <person name="Morgan M.B."/>
            <person name="Miner G."/>
            <person name="Hamilton C."/>
            <person name="Huang Y."/>
            <person name="Waldron L."/>
            <person name="Verduzco D."/>
            <person name="Clerc-Blankenburg K.P."/>
            <person name="Dubchak I."/>
            <person name="Noor M.A.F."/>
            <person name="Anderson W."/>
            <person name="White K.P."/>
            <person name="Clark A.G."/>
            <person name="Schaeffer S.W."/>
            <person name="Gelbart W.M."/>
            <person name="Weinstock G.M."/>
            <person name="Gibbs R.A."/>
        </authorList>
    </citation>
    <scope>NUCLEOTIDE SEQUENCE [LARGE SCALE GENOMIC DNA]</scope>
    <source>
        <strain>MV2-25 / Tucson 14011-0121.94</strain>
    </source>
</reference>
<dbReference type="EC" id="2.8.1.12" evidence="2"/>
<dbReference type="EMBL" id="CM000070">
    <property type="protein sequence ID" value="EAL28242.2"/>
    <property type="molecule type" value="Genomic_DNA"/>
</dbReference>
<dbReference type="RefSeq" id="XP_001359099.2">
    <property type="nucleotide sequence ID" value="XM_001359062.3"/>
</dbReference>
<dbReference type="SMR" id="Q297G3"/>
<dbReference type="FunCoup" id="Q297G3">
    <property type="interactions" value="628"/>
</dbReference>
<dbReference type="STRING" id="46245.Q297G3"/>
<dbReference type="EnsemblMetazoa" id="FBtr0285772">
    <property type="protein sequence ID" value="FBpp0284210"/>
    <property type="gene ID" value="FBgn0070240"/>
</dbReference>
<dbReference type="GeneID" id="4802118"/>
<dbReference type="KEGG" id="dpo:4802118"/>
<dbReference type="CTD" id="43017"/>
<dbReference type="eggNOG" id="KOG3307">
    <property type="taxonomic scope" value="Eukaryota"/>
</dbReference>
<dbReference type="HOGENOM" id="CLU_045449_0_0_1"/>
<dbReference type="InParanoid" id="Q297G3"/>
<dbReference type="OMA" id="KIRSQWN"/>
<dbReference type="UniPathway" id="UPA00344"/>
<dbReference type="Proteomes" id="UP000001819">
    <property type="component" value="Chromosome 2"/>
</dbReference>
<dbReference type="Bgee" id="FBgn0070240">
    <property type="expression patterns" value="Expressed in female reproductive system and 2 other cell types or tissues"/>
</dbReference>
<dbReference type="GO" id="GO:0005829">
    <property type="term" value="C:cytosol"/>
    <property type="evidence" value="ECO:0000250"/>
    <property type="project" value="UniProtKB"/>
</dbReference>
<dbReference type="GO" id="GO:1990140">
    <property type="term" value="C:molybdopterin synthase complex"/>
    <property type="evidence" value="ECO:0000250"/>
    <property type="project" value="UniProtKB"/>
</dbReference>
<dbReference type="GO" id="GO:0030366">
    <property type="term" value="F:molybdopterin synthase activity"/>
    <property type="evidence" value="ECO:0007669"/>
    <property type="project" value="UniProtKB-UniRule"/>
</dbReference>
<dbReference type="GO" id="GO:0006777">
    <property type="term" value="P:Mo-molybdopterin cofactor biosynthetic process"/>
    <property type="evidence" value="ECO:0000250"/>
    <property type="project" value="UniProtKB"/>
</dbReference>
<dbReference type="CDD" id="cd00756">
    <property type="entry name" value="MoaE"/>
    <property type="match status" value="1"/>
</dbReference>
<dbReference type="FunFam" id="3.90.1170.40:FF:000002">
    <property type="entry name" value="Molybdopterin synthase catalytic subunit"/>
    <property type="match status" value="1"/>
</dbReference>
<dbReference type="Gene3D" id="3.90.1170.40">
    <property type="entry name" value="Molybdopterin biosynthesis MoaE subunit"/>
    <property type="match status" value="1"/>
</dbReference>
<dbReference type="HAMAP" id="MF_03052">
    <property type="entry name" value="MOC2B"/>
    <property type="match status" value="1"/>
</dbReference>
<dbReference type="InterPro" id="IPR036563">
    <property type="entry name" value="MoaE_sf"/>
</dbReference>
<dbReference type="InterPro" id="IPR028888">
    <property type="entry name" value="MOCS2B_euk"/>
</dbReference>
<dbReference type="InterPro" id="IPR003448">
    <property type="entry name" value="Mopterin_biosynth_MoaE"/>
</dbReference>
<dbReference type="PANTHER" id="PTHR23404">
    <property type="entry name" value="MOLYBDOPTERIN SYNTHASE RELATED"/>
    <property type="match status" value="1"/>
</dbReference>
<dbReference type="Pfam" id="PF02391">
    <property type="entry name" value="MoaE"/>
    <property type="match status" value="1"/>
</dbReference>
<dbReference type="SUPFAM" id="SSF54690">
    <property type="entry name" value="Molybdopterin synthase subunit MoaE"/>
    <property type="match status" value="1"/>
</dbReference>
<gene>
    <name evidence="1" type="primary">Mocs2B</name>
    <name evidence="2" type="synonym">Mocs2</name>
    <name type="ORF">GA10181</name>
</gene>
<protein>
    <recommendedName>
        <fullName evidence="2">Molybdopterin synthase catalytic subunit</fullName>
        <ecNumber evidence="2">2.8.1.12</ecNumber>
    </recommendedName>
    <alternativeName>
        <fullName evidence="2">Molybdenum cofactor synthesis protein 2 large subunit</fullName>
    </alternativeName>
    <alternativeName>
        <fullName evidence="2">Molybdenum cofactor synthesis protein 2B</fullName>
        <shortName evidence="2">MOCS2B</shortName>
    </alternativeName>
</protein>
<proteinExistence type="inferred from homology"/>